<proteinExistence type="evidence at protein level"/>
<name>PAR10_HUMAN</name>
<keyword id="KW-0002">3D-structure</keyword>
<keyword id="KW-0007">Acetylation</keyword>
<keyword id="KW-0013">ADP-ribosylation</keyword>
<keyword id="KW-0963">Cytoplasm</keyword>
<keyword id="KW-0227">DNA damage</keyword>
<keyword id="KW-0234">DNA repair</keyword>
<keyword id="KW-0328">Glycosyltransferase</keyword>
<keyword id="KW-0520">NAD</keyword>
<keyword id="KW-0548">Nucleotidyltransferase</keyword>
<keyword id="KW-0539">Nucleus</keyword>
<keyword id="KW-0597">Phosphoprotein</keyword>
<keyword id="KW-1267">Proteomics identification</keyword>
<keyword id="KW-1185">Reference proteome</keyword>
<keyword id="KW-0808">Transferase</keyword>
<sequence>MVAMAEAEAGVAVEVRGLPPAVPDELLTLYFENRRRSGGGPVLSWQRLGCGGVLTFREPADAERVLAQADHELHGAQLSLRPAPPRAPARLLLQGLPPGTTPQRLEQHVQALLRASGLPVQPCCALASPRPDRALVQLPKPLSEADVRVLEEQAQNLGLEGTLVSLARVPQARAVRVVGDGASVDLLLLELYLENERRSGGGPLEDLQRLPGPLGTVASFQQWQVAERVLQQEHRLQGSELSLVPHYDILEPEELAENTSGGDHPSTQGPRATKHALLRTGGLVTALQGAGTVTMGSGEEPGQSGASLRTGPMVQGRGIMTTGSGQEPGQSGTSLRTGPMGSLGQAEQVSSMPMGSLEHEGLVSLRPVGLQEQEGPMSLGPVGSAGPVETSKGLLGQEGLVEIAMDSPEQEGLVGPMEITMGSLEKAGPVSPGCVKLAGQEGLVEMVLLMEPGAMRFLQLYHEDLLAGLGDVALLPLEGPDMTGFRLCGAQASCQAAEEFLRSLLGSISCHVLCLEHPGSARFLLGPEGQHLLQGLEAQFQCVFGTERLATATLDTGLEEVDPTEALPVLPGNAHTLWTPDSTGGDQEDVSLEEVRELLATLEGLDLDGEDWLPRELEEEGPQEQPEEEVTPGHEEEEPVAPSTVAPRWLEEEAALQLALHRSLEPQGQVAEQEEAAALRQALTLSLLEQPPLEAEEPPDGGTDGKAQLVVHSAFEQDVEELDRALRAALEVHVQEETVGPWRRTLPAELRARLERCHGVSVALRGDCTILRGFGAHPARAARHLVALLAGPWDQSLAFPLAASGPTLAGQTLKGPWNNLERLAENTGEFQEVVRAFYDTLDAARSSIRVVRVERVSHPLLQQQYELYRERLLQRCERRPVEQVLYHGTTAPAVPDICAHGFNRSFCGRNATVYGKGVYFARRASLSVQDRYSPPNADGHKAVFVARVLTGDYGQGRRGLRAPPLRGPGHVLLRYDSAVDCICQPSIFVIFHDTQALPTHLITCEHVPRASPDDPSGLPGRSPDT</sequence>
<feature type="chain" id="PRO_0000252435" description="Protein mono-ADP-ribosyltransferase PARP10">
    <location>
        <begin position="1"/>
        <end position="1025"/>
    </location>
</feature>
<feature type="domain" description="PARP catalytic" evidence="1">
    <location>
        <begin position="806"/>
        <end position="1025"/>
    </location>
</feature>
<feature type="region of interest" description="Disordered" evidence="2">
    <location>
        <begin position="318"/>
        <end position="346"/>
    </location>
</feature>
<feature type="region of interest" description="Disordered" evidence="2">
    <location>
        <begin position="569"/>
        <end position="589"/>
    </location>
</feature>
<feature type="region of interest" description="Disordered" evidence="2">
    <location>
        <begin position="617"/>
        <end position="644"/>
    </location>
</feature>
<feature type="region of interest" description="Myc binding" evidence="4">
    <location>
        <begin position="700"/>
        <end position="907"/>
    </location>
</feature>
<feature type="region of interest" description="Disordered" evidence="2">
    <location>
        <begin position="1006"/>
        <end position="1025"/>
    </location>
</feature>
<feature type="short sequence motif" description="Ubiquitin-interacting" evidence="14">
    <location>
        <begin position="650"/>
        <end position="667"/>
    </location>
</feature>
<feature type="short sequence motif" description="Ubiquitin-interacting" evidence="14">
    <location>
        <begin position="673"/>
        <end position="690"/>
    </location>
</feature>
<feature type="short sequence motif" description="PIP-box" evidence="10">
    <location>
        <begin position="831"/>
        <end position="838"/>
    </location>
</feature>
<feature type="compositionally biased region" description="Polar residues" evidence="2">
    <location>
        <begin position="321"/>
        <end position="336"/>
    </location>
</feature>
<feature type="compositionally biased region" description="Acidic residues" evidence="2">
    <location>
        <begin position="617"/>
        <end position="639"/>
    </location>
</feature>
<feature type="modified residue" description="Phosphothreonine" evidence="5">
    <location>
        <position position="101"/>
    </location>
</feature>
<feature type="modified residue" description="ADP-ribosyl glutamic acid" evidence="11">
    <location>
        <position position="106"/>
    </location>
</feature>
<feature type="modified residue" description="N6-(ADP-ribosyl)lysine" evidence="11">
    <location>
        <position position="140"/>
    </location>
</feature>
<feature type="modified residue" description="Phosphoserine" evidence="18">
    <location>
        <position position="378"/>
    </location>
</feature>
<feature type="modified residue" description="Phosphoserine" evidence="18">
    <location>
        <position position="423"/>
    </location>
</feature>
<feature type="modified residue" description="Phosphoserine" evidence="18">
    <location>
        <position position="431"/>
    </location>
</feature>
<feature type="modified residue" description="Phosphoserine" evidence="17 18">
    <location>
        <position position="663"/>
    </location>
</feature>
<feature type="modified residue" description="ADP-ribosyl glutamic acid" evidence="6">
    <location>
        <position position="882"/>
    </location>
</feature>
<feature type="modified residue" description="N6-(ADP-ribosyl)lysine" evidence="11">
    <location>
        <position position="916"/>
    </location>
</feature>
<feature type="modified residue" description="N6-acetyllysine" evidence="16">
    <location>
        <position position="916"/>
    </location>
</feature>
<feature type="modified residue" description="Phosphoserine" evidence="17">
    <location>
        <position position="1011"/>
    </location>
</feature>
<feature type="sequence variant" id="VAR_027859" description="In dbSNP:rs11136344.">
    <original>I</original>
    <variation>V</variation>
    <location>
        <position position="249"/>
    </location>
</feature>
<feature type="sequence variant" id="VAR_027860" description="In dbSNP:rs11136343.">
    <original>L</original>
    <variation>P</variation>
    <location>
        <position position="395"/>
    </location>
</feature>
<feature type="sequence variant" id="VAR_027861" description="In dbSNP:rs11544989." evidence="3">
    <original>V</original>
    <variation>A</variation>
    <location>
        <position position="630"/>
    </location>
</feature>
<feature type="mutagenesis site" description="Decreased interaction with PCNA." evidence="10">
    <location>
        <begin position="650"/>
        <end position="690"/>
    </location>
</feature>
<feature type="mutagenesis site" description="Abolishes interaction with PCNA." evidence="10">
    <original>QEVVRAFY</original>
    <variation>AEVARAAA</variation>
    <location>
        <begin position="831"/>
        <end position="838"/>
    </location>
</feature>
<feature type="mutagenesis site" description="Decreased auto-mono-ADP-ribosylation." evidence="6">
    <original>E</original>
    <variation>A</variation>
    <location>
        <position position="882"/>
    </location>
</feature>
<feature type="mutagenesis site" description="Abolishes catalytic activity; abolishes interaction with PARP14." evidence="6 8 10">
    <original>G</original>
    <variation>W</variation>
    <location>
        <position position="888"/>
    </location>
</feature>
<feature type="mutagenesis site" description="Strongly decreased catalytic activity." evidence="6">
    <original>DCI</original>
    <variation>ACA</variation>
    <location>
        <begin position="980"/>
        <end position="982"/>
    </location>
</feature>
<feature type="mutagenesis site" description="Strongly decreased catalytic activity." evidence="6">
    <original>P</original>
    <variation>A</variation>
    <location>
        <position position="985"/>
    </location>
</feature>
<feature type="mutagenesis site" description="Decreased catalytic activity." evidence="6">
    <original>I</original>
    <variation>E</variation>
    <location>
        <position position="987"/>
    </location>
</feature>
<feature type="mutagenesis site" description="Does not affect catalytic activity." evidence="6">
    <original>T</original>
    <variation>A</variation>
    <location>
        <position position="999"/>
    </location>
</feature>
<feature type="sequence conflict" description="In Ref. 1; BAB55067." evidence="13" ref="1">
    <original>M</original>
    <variation>I</variation>
    <location>
        <position position="313"/>
    </location>
</feature>
<feature type="sequence conflict" description="In Ref. 1; BAB55067." evidence="13" ref="1">
    <original>P</original>
    <variation>S</variation>
    <location>
        <position position="518"/>
    </location>
</feature>
<feature type="sequence conflict" description="In Ref. 3; AAH14229." evidence="13" ref="3">
    <original>L</original>
    <variation>P</variation>
    <location>
        <position position="813"/>
    </location>
</feature>
<feature type="sequence conflict" description="In Ref. 1; BAB55067." evidence="13" ref="1">
    <original>R</original>
    <variation>K</variation>
    <location>
        <position position="922"/>
    </location>
</feature>
<feature type="sequence conflict" description="In Ref. 2; BAD96634." evidence="13" ref="2">
    <original>D</original>
    <variation>G</variation>
    <location>
        <position position="1013"/>
    </location>
</feature>
<feature type="strand" evidence="19">
    <location>
        <begin position="12"/>
        <end position="17"/>
    </location>
</feature>
<feature type="helix" evidence="19">
    <location>
        <begin position="24"/>
        <end position="32"/>
    </location>
</feature>
<feature type="turn" evidence="19">
    <location>
        <begin position="34"/>
        <end position="37"/>
    </location>
</feature>
<feature type="strand" evidence="19">
    <location>
        <begin position="43"/>
        <end position="48"/>
    </location>
</feature>
<feature type="strand" evidence="19">
    <location>
        <begin position="51"/>
        <end position="55"/>
    </location>
</feature>
<feature type="helix" evidence="19">
    <location>
        <begin position="59"/>
        <end position="66"/>
    </location>
</feature>
<feature type="strand" evidence="19">
    <location>
        <begin position="72"/>
        <end position="77"/>
    </location>
</feature>
<feature type="strand" evidence="19">
    <location>
        <begin position="79"/>
        <end position="82"/>
    </location>
</feature>
<feature type="strand" evidence="21">
    <location>
        <begin position="819"/>
        <end position="822"/>
    </location>
</feature>
<feature type="strand" evidence="20">
    <location>
        <begin position="825"/>
        <end position="827"/>
    </location>
</feature>
<feature type="helix" evidence="21">
    <location>
        <begin position="828"/>
        <end position="839"/>
    </location>
</feature>
<feature type="helix" evidence="21">
    <location>
        <begin position="842"/>
        <end position="844"/>
    </location>
</feature>
<feature type="turn" evidence="21">
    <location>
        <begin position="845"/>
        <end position="847"/>
    </location>
</feature>
<feature type="strand" evidence="21">
    <location>
        <begin position="848"/>
        <end position="856"/>
    </location>
</feature>
<feature type="helix" evidence="21">
    <location>
        <begin position="859"/>
        <end position="875"/>
    </location>
</feature>
<feature type="strand" evidence="22">
    <location>
        <begin position="877"/>
        <end position="879"/>
    </location>
</feature>
<feature type="strand" evidence="21">
    <location>
        <begin position="883"/>
        <end position="889"/>
    </location>
</feature>
<feature type="helix" evidence="21">
    <location>
        <begin position="891"/>
        <end position="893"/>
    </location>
</feature>
<feature type="helix" evidence="21">
    <location>
        <begin position="894"/>
        <end position="900"/>
    </location>
</feature>
<feature type="helix" evidence="21">
    <location>
        <begin position="904"/>
        <end position="906"/>
    </location>
</feature>
<feature type="strand" evidence="21">
    <location>
        <begin position="916"/>
        <end position="923"/>
    </location>
</feature>
<feature type="helix" evidence="21">
    <location>
        <begin position="924"/>
        <end position="927"/>
    </location>
</feature>
<feature type="turn" evidence="21">
    <location>
        <begin position="930"/>
        <end position="932"/>
    </location>
</feature>
<feature type="strand" evidence="21">
    <location>
        <begin position="941"/>
        <end position="948"/>
    </location>
</feature>
<feature type="strand" evidence="21">
    <location>
        <begin position="952"/>
        <end position="955"/>
    </location>
</feature>
<feature type="strand" evidence="20">
    <location>
        <begin position="961"/>
        <end position="963"/>
    </location>
</feature>
<feature type="strand" evidence="21">
    <location>
        <begin position="971"/>
        <end position="974"/>
    </location>
</feature>
<feature type="strand" evidence="21">
    <location>
        <begin position="976"/>
        <end position="980"/>
    </location>
</feature>
<feature type="strand" evidence="21">
    <location>
        <begin position="982"/>
        <end position="984"/>
    </location>
</feature>
<feature type="strand" evidence="21">
    <location>
        <begin position="987"/>
        <end position="990"/>
    </location>
</feature>
<feature type="strand" evidence="21">
    <location>
        <begin position="995"/>
        <end position="1006"/>
    </location>
</feature>
<dbReference type="EC" id="2.4.2.-" evidence="6 11"/>
<dbReference type="EMBL" id="AK027370">
    <property type="protein sequence ID" value="BAB55067.1"/>
    <property type="molecule type" value="mRNA"/>
</dbReference>
<dbReference type="EMBL" id="AK075250">
    <property type="protein sequence ID" value="BAC11498.1"/>
    <property type="status" value="ALT_SEQ"/>
    <property type="molecule type" value="mRNA"/>
</dbReference>
<dbReference type="EMBL" id="AK222914">
    <property type="protein sequence ID" value="BAD96634.1"/>
    <property type="molecule type" value="mRNA"/>
</dbReference>
<dbReference type="EMBL" id="BC014229">
    <property type="protein sequence ID" value="AAH14229.2"/>
    <property type="molecule type" value="mRNA"/>
</dbReference>
<dbReference type="EMBL" id="BC019030">
    <property type="protein sequence ID" value="AAH19030.2"/>
    <property type="molecule type" value="mRNA"/>
</dbReference>
<dbReference type="CCDS" id="CCDS34960.1"/>
<dbReference type="RefSeq" id="NP_116178.2">
    <property type="nucleotide sequence ID" value="NM_032789.5"/>
</dbReference>
<dbReference type="RefSeq" id="XP_047278283.1">
    <property type="nucleotide sequence ID" value="XM_047422327.1"/>
</dbReference>
<dbReference type="PDB" id="2DHX">
    <property type="method" value="NMR"/>
    <property type="chains" value="A=10-100"/>
</dbReference>
<dbReference type="PDB" id="3HKV">
    <property type="method" value="X-ray"/>
    <property type="resolution" value="2.10 A"/>
    <property type="chains" value="A/B=809-1017"/>
</dbReference>
<dbReference type="PDB" id="5LX6">
    <property type="method" value="X-ray"/>
    <property type="resolution" value="1.25 A"/>
    <property type="chains" value="A/B=819-1007"/>
</dbReference>
<dbReference type="PDB" id="6FXI">
    <property type="method" value="X-ray"/>
    <property type="resolution" value="2.60 A"/>
    <property type="chains" value="A/B=819-1007"/>
</dbReference>
<dbReference type="PDBsum" id="2DHX"/>
<dbReference type="PDBsum" id="3HKV"/>
<dbReference type="PDBsum" id="5LX6"/>
<dbReference type="PDBsum" id="6FXI"/>
<dbReference type="SMR" id="Q53GL7"/>
<dbReference type="BioGRID" id="124320">
    <property type="interactions" value="35"/>
</dbReference>
<dbReference type="FunCoup" id="Q53GL7">
    <property type="interactions" value="1202"/>
</dbReference>
<dbReference type="IntAct" id="Q53GL7">
    <property type="interactions" value="10"/>
</dbReference>
<dbReference type="MINT" id="Q53GL7"/>
<dbReference type="STRING" id="9606.ENSP00000434776"/>
<dbReference type="BindingDB" id="Q53GL7"/>
<dbReference type="ChEMBL" id="CHEMBL2429708"/>
<dbReference type="DrugCentral" id="Q53GL7"/>
<dbReference type="GuidetoPHARMACOLOGY" id="3267"/>
<dbReference type="GlyCosmos" id="Q53GL7">
    <property type="glycosylation" value="2 sites, 1 glycan"/>
</dbReference>
<dbReference type="GlyGen" id="Q53GL7">
    <property type="glycosylation" value="3 sites, 1 O-linked glycan (2 sites)"/>
</dbReference>
<dbReference type="iPTMnet" id="Q53GL7"/>
<dbReference type="PhosphoSitePlus" id="Q53GL7"/>
<dbReference type="BioMuta" id="PARP10"/>
<dbReference type="DMDM" id="116248563"/>
<dbReference type="jPOST" id="Q53GL7"/>
<dbReference type="MassIVE" id="Q53GL7"/>
<dbReference type="PaxDb" id="9606-ENSP00000325618"/>
<dbReference type="PeptideAtlas" id="Q53GL7"/>
<dbReference type="ProteomicsDB" id="62485"/>
<dbReference type="Pumba" id="Q53GL7"/>
<dbReference type="Antibodypedia" id="28206">
    <property type="antibodies" value="104 antibodies from 28 providers"/>
</dbReference>
<dbReference type="DNASU" id="84875"/>
<dbReference type="Ensembl" id="ENST00000313028.12">
    <property type="protein sequence ID" value="ENSP00000325618.7"/>
    <property type="gene ID" value="ENSG00000178685.14"/>
</dbReference>
<dbReference type="GeneID" id="84875"/>
<dbReference type="KEGG" id="hsa:84875"/>
<dbReference type="MANE-Select" id="ENST00000313028.12">
    <property type="protein sequence ID" value="ENSP00000325618.7"/>
    <property type="RefSeq nucleotide sequence ID" value="NM_032789.5"/>
    <property type="RefSeq protein sequence ID" value="NP_116178.2"/>
</dbReference>
<dbReference type="UCSC" id="uc003zal.5">
    <property type="organism name" value="human"/>
</dbReference>
<dbReference type="AGR" id="HGNC:25895"/>
<dbReference type="CTD" id="84875"/>
<dbReference type="DisGeNET" id="84875"/>
<dbReference type="GeneCards" id="PARP10"/>
<dbReference type="HGNC" id="HGNC:25895">
    <property type="gene designation" value="PARP10"/>
</dbReference>
<dbReference type="HPA" id="ENSG00000178685">
    <property type="expression patterns" value="Low tissue specificity"/>
</dbReference>
<dbReference type="MalaCards" id="PARP10"/>
<dbReference type="MIM" id="609564">
    <property type="type" value="gene"/>
</dbReference>
<dbReference type="neXtProt" id="NX_Q53GL7"/>
<dbReference type="OpenTargets" id="ENSG00000178685"/>
<dbReference type="PharmGKB" id="PA134892853"/>
<dbReference type="VEuPathDB" id="HostDB:ENSG00000178685"/>
<dbReference type="eggNOG" id="ENOG502R572">
    <property type="taxonomic scope" value="Eukaryota"/>
</dbReference>
<dbReference type="GeneTree" id="ENSGT00940000162035"/>
<dbReference type="InParanoid" id="Q53GL7"/>
<dbReference type="OMA" id="DHWLQGS"/>
<dbReference type="OrthoDB" id="6133115at2759"/>
<dbReference type="PAN-GO" id="Q53GL7">
    <property type="GO annotations" value="8 GO annotations based on evolutionary models"/>
</dbReference>
<dbReference type="PhylomeDB" id="Q53GL7"/>
<dbReference type="TreeFam" id="TF328965"/>
<dbReference type="BRENDA" id="2.4.2.30">
    <property type="organism ID" value="2681"/>
</dbReference>
<dbReference type="PathwayCommons" id="Q53GL7"/>
<dbReference type="Reactome" id="R-HSA-197264">
    <property type="pathway name" value="Nicotinamide salvaging"/>
</dbReference>
<dbReference type="Reactome" id="R-HSA-9683610">
    <property type="pathway name" value="Maturation of nucleoprotein"/>
</dbReference>
<dbReference type="Reactome" id="R-HSA-9694631">
    <property type="pathway name" value="Maturation of nucleoprotein"/>
</dbReference>
<dbReference type="SignaLink" id="Q53GL7"/>
<dbReference type="SIGNOR" id="Q53GL7"/>
<dbReference type="BioGRID-ORCS" id="84875">
    <property type="hits" value="25 hits in 1151 CRISPR screens"/>
</dbReference>
<dbReference type="ChiTaRS" id="PARP10">
    <property type="organism name" value="human"/>
</dbReference>
<dbReference type="EvolutionaryTrace" id="Q53GL7"/>
<dbReference type="GeneWiki" id="PARP10"/>
<dbReference type="GenomeRNAi" id="84875"/>
<dbReference type="Pharos" id="Q53GL7">
    <property type="development level" value="Tchem"/>
</dbReference>
<dbReference type="PRO" id="PR:Q53GL7"/>
<dbReference type="Proteomes" id="UP000005640">
    <property type="component" value="Chromosome 8"/>
</dbReference>
<dbReference type="RNAct" id="Q53GL7">
    <property type="molecule type" value="protein"/>
</dbReference>
<dbReference type="Bgee" id="ENSG00000178685">
    <property type="expression patterns" value="Expressed in granulocyte and 169 other cell types or tissues"/>
</dbReference>
<dbReference type="ExpressionAtlas" id="Q53GL7">
    <property type="expression patterns" value="baseline and differential"/>
</dbReference>
<dbReference type="GO" id="GO:0005737">
    <property type="term" value="C:cytoplasm"/>
    <property type="evidence" value="ECO:0000314"/>
    <property type="project" value="UniProtKB"/>
</dbReference>
<dbReference type="GO" id="GO:0005829">
    <property type="term" value="C:cytosol"/>
    <property type="evidence" value="ECO:0000314"/>
    <property type="project" value="HPA"/>
</dbReference>
<dbReference type="GO" id="GO:0005794">
    <property type="term" value="C:Golgi apparatus"/>
    <property type="evidence" value="ECO:0000314"/>
    <property type="project" value="HPA"/>
</dbReference>
<dbReference type="GO" id="GO:0005730">
    <property type="term" value="C:nucleolus"/>
    <property type="evidence" value="ECO:0000314"/>
    <property type="project" value="HPA"/>
</dbReference>
<dbReference type="GO" id="GO:0005634">
    <property type="term" value="C:nucleus"/>
    <property type="evidence" value="ECO:0000314"/>
    <property type="project" value="UniProtKB"/>
</dbReference>
<dbReference type="GO" id="GO:0140297">
    <property type="term" value="F:DNA-binding transcription factor binding"/>
    <property type="evidence" value="ECO:0000353"/>
    <property type="project" value="UniProtKB"/>
</dbReference>
<dbReference type="GO" id="GO:0070530">
    <property type="term" value="F:K63-linked polyubiquitin modification-dependent protein binding"/>
    <property type="evidence" value="ECO:0000315"/>
    <property type="project" value="UniProtKB"/>
</dbReference>
<dbReference type="GO" id="GO:0003950">
    <property type="term" value="F:NAD+ poly-ADP-ribosyltransferase activity"/>
    <property type="evidence" value="ECO:0000315"/>
    <property type="project" value="UniProtKB"/>
</dbReference>
<dbReference type="GO" id="GO:1990404">
    <property type="term" value="F:NAD+-protein mono-ADP-ribosyltransferase activity"/>
    <property type="evidence" value="ECO:0000314"/>
    <property type="project" value="UniProtKB"/>
</dbReference>
<dbReference type="GO" id="GO:0140806">
    <property type="term" value="F:NAD+-protein-aspartate ADP-ribosyltransferase activity"/>
    <property type="evidence" value="ECO:0007669"/>
    <property type="project" value="RHEA"/>
</dbReference>
<dbReference type="GO" id="GO:0140807">
    <property type="term" value="F:NAD+-protein-glutamate ADP-ribosyltransferase activity"/>
    <property type="evidence" value="ECO:0007669"/>
    <property type="project" value="RHEA"/>
</dbReference>
<dbReference type="GO" id="GO:0140804">
    <property type="term" value="F:NAD+-protein-lysine ADP-ribosyltransferase activity"/>
    <property type="evidence" value="ECO:0007669"/>
    <property type="project" value="RHEA"/>
</dbReference>
<dbReference type="GO" id="GO:0016779">
    <property type="term" value="F:nucleotidyltransferase activity"/>
    <property type="evidence" value="ECO:0007669"/>
    <property type="project" value="UniProtKB-KW"/>
</dbReference>
<dbReference type="GO" id="GO:0003714">
    <property type="term" value="F:transcription corepressor activity"/>
    <property type="evidence" value="ECO:0000318"/>
    <property type="project" value="GO_Central"/>
</dbReference>
<dbReference type="GO" id="GO:0006325">
    <property type="term" value="P:chromatin organization"/>
    <property type="evidence" value="ECO:0000314"/>
    <property type="project" value="UniProtKB"/>
</dbReference>
<dbReference type="GO" id="GO:0048147">
    <property type="term" value="P:negative regulation of fibroblast proliferation"/>
    <property type="evidence" value="ECO:0000314"/>
    <property type="project" value="UniProtKB"/>
</dbReference>
<dbReference type="GO" id="GO:0010629">
    <property type="term" value="P:negative regulation of gene expression"/>
    <property type="evidence" value="ECO:0000315"/>
    <property type="project" value="UniProtKB"/>
</dbReference>
<dbReference type="GO" id="GO:0032088">
    <property type="term" value="P:negative regulation of NF-kappaB transcription factor activity"/>
    <property type="evidence" value="ECO:0000315"/>
    <property type="project" value="UniProtKB"/>
</dbReference>
<dbReference type="GO" id="GO:1900045">
    <property type="term" value="P:negative regulation of protein K63-linked ubiquitination"/>
    <property type="evidence" value="ECO:0000315"/>
    <property type="project" value="UniProtKB"/>
</dbReference>
<dbReference type="GO" id="GO:0070213">
    <property type="term" value="P:protein auto-ADP-ribosylation"/>
    <property type="evidence" value="ECO:0000314"/>
    <property type="project" value="UniProtKB"/>
</dbReference>
<dbReference type="GO" id="GO:0070212">
    <property type="term" value="P:protein poly-ADP-ribosylation"/>
    <property type="evidence" value="ECO:0000314"/>
    <property type="project" value="UniProtKB"/>
</dbReference>
<dbReference type="GO" id="GO:0019985">
    <property type="term" value="P:translesion synthesis"/>
    <property type="evidence" value="ECO:0000314"/>
    <property type="project" value="UniProtKB"/>
</dbReference>
<dbReference type="GO" id="GO:0019082">
    <property type="term" value="P:viral protein processing"/>
    <property type="evidence" value="ECO:0000304"/>
    <property type="project" value="Reactome"/>
</dbReference>
<dbReference type="CDD" id="cd12547">
    <property type="entry name" value="RRM1_2_PAR10"/>
    <property type="match status" value="1"/>
</dbReference>
<dbReference type="CDD" id="cd01439">
    <property type="entry name" value="TCCD_inducible_PARP_like"/>
    <property type="match status" value="1"/>
</dbReference>
<dbReference type="FunFam" id="3.30.70.330:FF:000344">
    <property type="entry name" value="Poly [ADP-ribose] polymerase"/>
    <property type="match status" value="2"/>
</dbReference>
<dbReference type="FunFam" id="3.90.228.10:FF:000008">
    <property type="entry name" value="Poly [ADP-ribose] polymerase"/>
    <property type="match status" value="1"/>
</dbReference>
<dbReference type="Gene3D" id="3.30.70.330">
    <property type="match status" value="2"/>
</dbReference>
<dbReference type="Gene3D" id="3.90.228.10">
    <property type="match status" value="1"/>
</dbReference>
<dbReference type="InterPro" id="IPR052056">
    <property type="entry name" value="Mono-ARTD/PARP"/>
</dbReference>
<dbReference type="InterPro" id="IPR012677">
    <property type="entry name" value="Nucleotide-bd_a/b_plait_sf"/>
</dbReference>
<dbReference type="InterPro" id="IPR034464">
    <property type="entry name" value="PAR10_RRM1_2"/>
</dbReference>
<dbReference type="InterPro" id="IPR012317">
    <property type="entry name" value="Poly(ADP-ribose)pol_cat_dom"/>
</dbReference>
<dbReference type="PANTHER" id="PTHR14453">
    <property type="entry name" value="PARP/ZINC FINGER CCCH TYPE DOMAIN CONTAINING PROTEIN"/>
    <property type="match status" value="1"/>
</dbReference>
<dbReference type="PANTHER" id="PTHR14453:SF94">
    <property type="entry name" value="PROTEIN MONO-ADP-RIBOSYLTRANSFERASE PARP10"/>
    <property type="match status" value="1"/>
</dbReference>
<dbReference type="Pfam" id="PF00644">
    <property type="entry name" value="PARP"/>
    <property type="match status" value="1"/>
</dbReference>
<dbReference type="Pfam" id="PF23085">
    <property type="entry name" value="RRM_PARP14_3"/>
    <property type="match status" value="2"/>
</dbReference>
<dbReference type="SUPFAM" id="SSF56399">
    <property type="entry name" value="ADP-ribosylation"/>
    <property type="match status" value="1"/>
</dbReference>
<dbReference type="PROSITE" id="PS51059">
    <property type="entry name" value="PARP_CATALYTIC"/>
    <property type="match status" value="1"/>
</dbReference>
<reference key="1">
    <citation type="journal article" date="2004" name="Nat. Genet.">
        <title>Complete sequencing and characterization of 21,243 full-length human cDNAs.</title>
        <authorList>
            <person name="Ota T."/>
            <person name="Suzuki Y."/>
            <person name="Nishikawa T."/>
            <person name="Otsuki T."/>
            <person name="Sugiyama T."/>
            <person name="Irie R."/>
            <person name="Wakamatsu A."/>
            <person name="Hayashi K."/>
            <person name="Sato H."/>
            <person name="Nagai K."/>
            <person name="Kimura K."/>
            <person name="Makita H."/>
            <person name="Sekine M."/>
            <person name="Obayashi M."/>
            <person name="Nishi T."/>
            <person name="Shibahara T."/>
            <person name="Tanaka T."/>
            <person name="Ishii S."/>
            <person name="Yamamoto J."/>
            <person name="Saito K."/>
            <person name="Kawai Y."/>
            <person name="Isono Y."/>
            <person name="Nakamura Y."/>
            <person name="Nagahari K."/>
            <person name="Murakami K."/>
            <person name="Yasuda T."/>
            <person name="Iwayanagi T."/>
            <person name="Wagatsuma M."/>
            <person name="Shiratori A."/>
            <person name="Sudo H."/>
            <person name="Hosoiri T."/>
            <person name="Kaku Y."/>
            <person name="Kodaira H."/>
            <person name="Kondo H."/>
            <person name="Sugawara M."/>
            <person name="Takahashi M."/>
            <person name="Kanda K."/>
            <person name="Yokoi T."/>
            <person name="Furuya T."/>
            <person name="Kikkawa E."/>
            <person name="Omura Y."/>
            <person name="Abe K."/>
            <person name="Kamihara K."/>
            <person name="Katsuta N."/>
            <person name="Sato K."/>
            <person name="Tanikawa M."/>
            <person name="Yamazaki M."/>
            <person name="Ninomiya K."/>
            <person name="Ishibashi T."/>
            <person name="Yamashita H."/>
            <person name="Murakawa K."/>
            <person name="Fujimori K."/>
            <person name="Tanai H."/>
            <person name="Kimata M."/>
            <person name="Watanabe M."/>
            <person name="Hiraoka S."/>
            <person name="Chiba Y."/>
            <person name="Ishida S."/>
            <person name="Ono Y."/>
            <person name="Takiguchi S."/>
            <person name="Watanabe S."/>
            <person name="Yosida M."/>
            <person name="Hotuta T."/>
            <person name="Kusano J."/>
            <person name="Kanehori K."/>
            <person name="Takahashi-Fujii A."/>
            <person name="Hara H."/>
            <person name="Tanase T.-O."/>
            <person name="Nomura Y."/>
            <person name="Togiya S."/>
            <person name="Komai F."/>
            <person name="Hara R."/>
            <person name="Takeuchi K."/>
            <person name="Arita M."/>
            <person name="Imose N."/>
            <person name="Musashino K."/>
            <person name="Yuuki H."/>
            <person name="Oshima A."/>
            <person name="Sasaki N."/>
            <person name="Aotsuka S."/>
            <person name="Yoshikawa Y."/>
            <person name="Matsunawa H."/>
            <person name="Ichihara T."/>
            <person name="Shiohata N."/>
            <person name="Sano S."/>
            <person name="Moriya S."/>
            <person name="Momiyama H."/>
            <person name="Satoh N."/>
            <person name="Takami S."/>
            <person name="Terashima Y."/>
            <person name="Suzuki O."/>
            <person name="Nakagawa S."/>
            <person name="Senoh A."/>
            <person name="Mizoguchi H."/>
            <person name="Goto Y."/>
            <person name="Shimizu F."/>
            <person name="Wakebe H."/>
            <person name="Hishigaki H."/>
            <person name="Watanabe T."/>
            <person name="Sugiyama A."/>
            <person name="Takemoto M."/>
            <person name="Kawakami B."/>
            <person name="Yamazaki M."/>
            <person name="Watanabe K."/>
            <person name="Kumagai A."/>
            <person name="Itakura S."/>
            <person name="Fukuzumi Y."/>
            <person name="Fujimori Y."/>
            <person name="Komiyama M."/>
            <person name="Tashiro H."/>
            <person name="Tanigami A."/>
            <person name="Fujiwara T."/>
            <person name="Ono T."/>
            <person name="Yamada K."/>
            <person name="Fujii Y."/>
            <person name="Ozaki K."/>
            <person name="Hirao M."/>
            <person name="Ohmori Y."/>
            <person name="Kawabata A."/>
            <person name="Hikiji T."/>
            <person name="Kobatake N."/>
            <person name="Inagaki H."/>
            <person name="Ikema Y."/>
            <person name="Okamoto S."/>
            <person name="Okitani R."/>
            <person name="Kawakami T."/>
            <person name="Noguchi S."/>
            <person name="Itoh T."/>
            <person name="Shigeta K."/>
            <person name="Senba T."/>
            <person name="Matsumura K."/>
            <person name="Nakajima Y."/>
            <person name="Mizuno T."/>
            <person name="Morinaga M."/>
            <person name="Sasaki M."/>
            <person name="Togashi T."/>
            <person name="Oyama M."/>
            <person name="Hata H."/>
            <person name="Watanabe M."/>
            <person name="Komatsu T."/>
            <person name="Mizushima-Sugano J."/>
            <person name="Satoh T."/>
            <person name="Shirai Y."/>
            <person name="Takahashi Y."/>
            <person name="Nakagawa K."/>
            <person name="Okumura K."/>
            <person name="Nagase T."/>
            <person name="Nomura N."/>
            <person name="Kikuchi H."/>
            <person name="Masuho Y."/>
            <person name="Yamashita R."/>
            <person name="Nakai K."/>
            <person name="Yada T."/>
            <person name="Nakamura Y."/>
            <person name="Ohara O."/>
            <person name="Isogai T."/>
            <person name="Sugano S."/>
        </authorList>
    </citation>
    <scope>NUCLEOTIDE SEQUENCE [LARGE SCALE MRNA]</scope>
    <scope>VARIANT ALA-630</scope>
    <source>
        <tissue>Mammary gland</tissue>
        <tissue>Thyroid</tissue>
    </source>
</reference>
<reference key="2">
    <citation type="submission" date="2005-04" db="EMBL/GenBank/DDBJ databases">
        <authorList>
            <person name="Suzuki Y."/>
            <person name="Sugano S."/>
            <person name="Totoki Y."/>
            <person name="Toyoda A."/>
            <person name="Takeda T."/>
            <person name="Sakaki Y."/>
            <person name="Tanaka A."/>
            <person name="Yokoyama S."/>
        </authorList>
    </citation>
    <scope>NUCLEOTIDE SEQUENCE [LARGE SCALE MRNA]</scope>
    <source>
        <tissue>Kidney</tissue>
    </source>
</reference>
<reference key="3">
    <citation type="journal article" date="2004" name="Genome Res.">
        <title>The status, quality, and expansion of the NIH full-length cDNA project: the Mammalian Gene Collection (MGC).</title>
        <authorList>
            <consortium name="The MGC Project Team"/>
        </authorList>
    </citation>
    <scope>NUCLEOTIDE SEQUENCE [LARGE SCALE MRNA] OF 357-1025</scope>
    <source>
        <tissue>Skin</tissue>
        <tissue>Uterus</tissue>
    </source>
</reference>
<reference key="4">
    <citation type="journal article" date="2005" name="Oncogene">
        <title>PARP-10, a novel Myc-interacting protein with poly(ADP-ribose) polymerase activity, inhibits transformation.</title>
        <authorList>
            <person name="Yu M."/>
            <person name="Schreek S."/>
            <person name="Cerni C."/>
            <person name="Schamberger C."/>
            <person name="Lesniewicz K."/>
            <person name="Poreba E."/>
            <person name="Vervoorts J."/>
            <person name="Walsemann G."/>
            <person name="Groetzinger J."/>
            <person name="Kremmer E."/>
            <person name="Mehraein Y."/>
            <person name="Mertsching J."/>
            <person name="Kraft R."/>
            <person name="Austen M."/>
            <person name="Luescher-Firzlaff J."/>
            <person name="Luescher B."/>
        </authorList>
    </citation>
    <scope>IDENTIFICATION</scope>
    <scope>SUBCELLULAR LOCATION</scope>
    <scope>TISSUE SPECIFICITY</scope>
    <scope>INTERACTION WITH MYC</scope>
</reference>
<reference key="5">
    <citation type="journal article" date="2006" name="J. Biol. Chem.">
        <title>CDK-dependent activation of poly(ADP-ribose) polymerase member 10 (PARP10).</title>
        <authorList>
            <person name="Chou H.Y."/>
            <person name="Chou H.T."/>
            <person name="Lee S.C."/>
        </authorList>
    </citation>
    <scope>PHOSPHORYLATION AT THR-101</scope>
</reference>
<reference key="6">
    <citation type="journal article" date="2008" name="Mol. Cell">
        <title>Substrate-assisted catalysis by PARP10 limits its activity to mono-ADP-ribosylation.</title>
        <authorList>
            <person name="Kleine H."/>
            <person name="Poreba E."/>
            <person name="Lesniewicz K."/>
            <person name="Hassa P.O."/>
            <person name="Hottiger M.O."/>
            <person name="Litchfield D.W."/>
            <person name="Shilton B.H."/>
            <person name="Luescher B."/>
        </authorList>
    </citation>
    <scope>FUNCTION</scope>
    <scope>CATALYTIC ACTIVITY</scope>
    <scope>ADP-RIBOSYLATION AT GLU-882</scope>
    <scope>MUTAGENESIS OF GLU-882; GLY-888; 980-ASP--ILE-982; PRO-985; ILE-987 AND THR-999</scope>
</reference>
<reference key="7">
    <citation type="journal article" date="2009" name="Science">
        <title>Lysine acetylation targets protein complexes and co-regulates major cellular functions.</title>
        <authorList>
            <person name="Choudhary C."/>
            <person name="Kumar C."/>
            <person name="Gnad F."/>
            <person name="Nielsen M.L."/>
            <person name="Rehman M."/>
            <person name="Walther T.C."/>
            <person name="Olsen J.V."/>
            <person name="Mann M."/>
        </authorList>
    </citation>
    <scope>ACETYLATION [LARGE SCALE ANALYSIS] AT LYS-916</scope>
    <scope>IDENTIFICATION BY MASS SPECTROMETRY [LARGE SCALE ANALYSIS]</scope>
</reference>
<reference key="8">
    <citation type="journal article" date="2010" name="Trends Biochem. Sci.">
        <title>Toward a unified nomenclature for mammalian ADP-ribosyltransferases.</title>
        <authorList>
            <person name="Hottiger M.O."/>
            <person name="Hassa P.O."/>
            <person name="Luscher B."/>
            <person name="Schuler H."/>
            <person name="Koch-Nolte F."/>
        </authorList>
    </citation>
    <scope>NOMENCLATURE</scope>
</reference>
<reference key="9">
    <citation type="journal article" date="2013" name="J. Proteome Res.">
        <title>Toward a comprehensive characterization of a human cancer cell phosphoproteome.</title>
        <authorList>
            <person name="Zhou H."/>
            <person name="Di Palma S."/>
            <person name="Preisinger C."/>
            <person name="Peng M."/>
            <person name="Polat A.N."/>
            <person name="Heck A.J."/>
            <person name="Mohammed S."/>
        </authorList>
    </citation>
    <scope>PHOSPHORYLATION [LARGE SCALE ANALYSIS] AT SER-663 AND SER-1011</scope>
    <scope>IDENTIFICATION BY MASS SPECTROMETRY [LARGE SCALE ANALYSIS]</scope>
    <source>
        <tissue>Cervix carcinoma</tissue>
    </source>
</reference>
<reference key="10">
    <citation type="journal article" date="2013" name="Cell Commun. Signal.">
        <title>ARTD10 substrate identification on protein microarrays: regulation of GSK3beta by mono-ADP-ribosylation.</title>
        <authorList>
            <person name="Feijs K.L."/>
            <person name="Kleine H."/>
            <person name="Braczynski A."/>
            <person name="Forst A.H."/>
            <person name="Herzog N."/>
            <person name="Verheugd P."/>
            <person name="Linzen U."/>
            <person name="Kremmer E."/>
            <person name="Luscher B."/>
        </authorList>
    </citation>
    <scope>FUNCTION</scope>
</reference>
<reference key="11">
    <citation type="journal article" date="2013" name="Nat. Struct. Mol. Biol.">
        <title>Macrodomain-containing proteins are new mono-ADP-ribosylhydrolases.</title>
        <authorList>
            <person name="Rosenthal F."/>
            <person name="Feijs K.L."/>
            <person name="Frugier E."/>
            <person name="Bonalli M."/>
            <person name="Forst A.H."/>
            <person name="Imhof R."/>
            <person name="Winkler H.C."/>
            <person name="Fischer D."/>
            <person name="Caflisch A."/>
            <person name="Hassa P.O."/>
            <person name="Luescher B."/>
            <person name="Hottiger M.O."/>
        </authorList>
    </citation>
    <scope>FUNCTION</scope>
</reference>
<reference key="12">
    <citation type="journal article" date="2013" name="Structure">
        <title>Recognition of mono-ADP-ribosylated ARTD10 substrates by ARTD8 macrodomains.</title>
        <authorList>
            <person name="Forst A.H."/>
            <person name="Karlberg T."/>
            <person name="Herzog N."/>
            <person name="Thorsell A.G."/>
            <person name="Gross A."/>
            <person name="Feijs K.L."/>
            <person name="Verheugd P."/>
            <person name="Kursula P."/>
            <person name="Nijmeijer B."/>
            <person name="Kremmer E."/>
            <person name="Kleine H."/>
            <person name="Ladurner A.G."/>
            <person name="Schuler H."/>
            <person name="Luscher B."/>
        </authorList>
    </citation>
    <scope>INTERACTION WITH PARP14</scope>
    <scope>MUTAGENESIS OF GLY-888</scope>
</reference>
<reference key="13">
    <citation type="journal article" date="2014" name="J. Proteomics">
        <title>An enzyme assisted RP-RPLC approach for in-depth analysis of human liver phosphoproteome.</title>
        <authorList>
            <person name="Bian Y."/>
            <person name="Song C."/>
            <person name="Cheng K."/>
            <person name="Dong M."/>
            <person name="Wang F."/>
            <person name="Huang J."/>
            <person name="Sun D."/>
            <person name="Wang L."/>
            <person name="Ye M."/>
            <person name="Zou H."/>
        </authorList>
    </citation>
    <scope>PHOSPHORYLATION [LARGE SCALE ANALYSIS] AT SER-378; SER-423; SER-431 AND SER-663</scope>
    <scope>IDENTIFICATION BY MASS SPECTROMETRY [LARGE SCALE ANALYSIS]</scope>
    <source>
        <tissue>Liver</tissue>
    </source>
</reference>
<reference key="14">
    <citation type="journal article" date="2014" name="J. Biol. Chem.">
        <title>The ADP-ribosyltransferase PARP10/ARTD10 interacts with proliferating cell nuclear antigen (PCNA) and is required for DNA damage tolerance.</title>
        <authorList>
            <person name="Nicolae C.M."/>
            <person name="Aho E.R."/>
            <person name="Vlahos A.H."/>
            <person name="Choe K.N."/>
            <person name="De S."/>
            <person name="Karras G.I."/>
            <person name="Moldovan G.L."/>
        </authorList>
    </citation>
    <scope>FUNCTION</scope>
    <scope>INTERACTION WITH PCNA</scope>
    <scope>MUTAGENESIS OF 650-LEU--GLN-690; 831-GLN--TYR-838 AND GLY-888</scope>
</reference>
<reference key="15">
    <citation type="journal article" date="2014" name="Nat. Commun.">
        <title>Family-wide analysis of poly(ADP-ribose) polymerase activity.</title>
        <authorList>
            <person name="Vyas S."/>
            <person name="Matic I."/>
            <person name="Uchima L."/>
            <person name="Rood J."/>
            <person name="Zaja R."/>
            <person name="Hay R.T."/>
            <person name="Ahel I."/>
            <person name="Chang P."/>
        </authorList>
    </citation>
    <scope>FUNCTION</scope>
    <scope>CATALYTIC ACTIVITY</scope>
    <scope>ADP-RIBOSYLATION AT GLU-106; LYS-140 AND LYS-916</scope>
</reference>
<reference key="16">
    <citation type="submission" date="2007-02" db="PDB data bank">
        <title>Solution structure of the RRM domain in the human poly (ADP-ribose) polymerase family, member 10 variant.</title>
        <authorList>
            <consortium name="RIKEN structural genomics initiative (RSGI)"/>
        </authorList>
    </citation>
    <scope>STRUCTURE BY NMR OF 7-101</scope>
</reference>
<reference key="17">
    <citation type="submission" date="2009-06" db="PDB data bank">
        <title>Human poly(ADP-ribose) polymerase 10, catalytic fragment in complex with an inhibitor 3-aminobenzamide.</title>
        <authorList>
            <consortium name="Structural genomics consortium (SGC)"/>
        </authorList>
    </citation>
    <scope>X-RAY CRYSTALLOGRAPHY (2.1 ANGSTROMS) OF 809-1017</scope>
</reference>
<comment type="function">
    <text evidence="6 7 9 10 11">ADP-ribosyltransferase that mediates mono-ADP-ribosylation of glutamate and aspartate residues on target proteins (PubMed:18851833, PubMed:23332125, PubMed:23474714, PubMed:25043379). In contrast to PARP1 and PARP2, it is not able to mediate poly-ADP-ribosylation (PubMed:18851833). Catalyzes mono-ADP-ribosylation of GSK3B, leading to negatively regulate GSK3B kinase activity (PubMed:23332125). Involved in translesion DNA synthesis in response to DNA damage via its interaction with PCNA (PubMed:24695737).</text>
</comment>
<comment type="catalytic activity">
    <reaction evidence="11">
        <text>L-lysyl-[protein] + NAD(+) = N(6)-(ADP-D-ribosyl)-L-lysyl-[protein] + nicotinamide + H(+)</text>
        <dbReference type="Rhea" id="RHEA:58220"/>
        <dbReference type="Rhea" id="RHEA-COMP:9752"/>
        <dbReference type="Rhea" id="RHEA-COMP:15088"/>
        <dbReference type="ChEBI" id="CHEBI:15378"/>
        <dbReference type="ChEBI" id="CHEBI:17154"/>
        <dbReference type="ChEBI" id="CHEBI:29969"/>
        <dbReference type="ChEBI" id="CHEBI:57540"/>
        <dbReference type="ChEBI" id="CHEBI:142515"/>
    </reaction>
    <physiologicalReaction direction="left-to-right" evidence="11">
        <dbReference type="Rhea" id="RHEA:58221"/>
    </physiologicalReaction>
</comment>
<comment type="catalytic activity">
    <reaction evidence="6">
        <text>L-aspartyl-[protein] + NAD(+) = 4-O-(ADP-D-ribosyl)-L-aspartyl-[protein] + nicotinamide</text>
        <dbReference type="Rhea" id="RHEA:54424"/>
        <dbReference type="Rhea" id="RHEA-COMP:9867"/>
        <dbReference type="Rhea" id="RHEA-COMP:13832"/>
        <dbReference type="ChEBI" id="CHEBI:17154"/>
        <dbReference type="ChEBI" id="CHEBI:29961"/>
        <dbReference type="ChEBI" id="CHEBI:57540"/>
        <dbReference type="ChEBI" id="CHEBI:138102"/>
    </reaction>
    <physiologicalReaction direction="left-to-right" evidence="6">
        <dbReference type="Rhea" id="RHEA:54425"/>
    </physiologicalReaction>
</comment>
<comment type="catalytic activity">
    <reaction evidence="6 11">
        <text>L-glutamyl-[protein] + NAD(+) = 5-O-(ADP-D-ribosyl)-L-glutamyl-[protein] + nicotinamide</text>
        <dbReference type="Rhea" id="RHEA:58224"/>
        <dbReference type="Rhea" id="RHEA-COMP:10208"/>
        <dbReference type="Rhea" id="RHEA-COMP:15089"/>
        <dbReference type="ChEBI" id="CHEBI:17154"/>
        <dbReference type="ChEBI" id="CHEBI:29973"/>
        <dbReference type="ChEBI" id="CHEBI:57540"/>
        <dbReference type="ChEBI" id="CHEBI:142540"/>
    </reaction>
    <physiologicalReaction direction="left-to-right" evidence="6 11">
        <dbReference type="Rhea" id="RHEA:58225"/>
    </physiologicalReaction>
</comment>
<comment type="subunit">
    <text evidence="4 8 10">Interacts with MYC (PubMed:15674325). Interacts with PARP14 (PubMed:23473667). Interacts (via-PIP box and ubiquitin-interacting motifs) with PCNA (PubMed:24695737).</text>
</comment>
<comment type="interaction">
    <interactant intactId="EBI-2857573">
        <id>Q53GL7</id>
    </interactant>
    <interactant intactId="EBI-8502288">
        <id>Q9Y530</id>
        <label>OARD1</label>
    </interactant>
    <organismsDiffer>false</organismsDiffer>
    <experiments>3</experiments>
</comment>
<comment type="subcellular location">
    <subcellularLocation>
        <location evidence="4">Nucleus</location>
        <location evidence="4">Nucleolus</location>
    </subcellularLocation>
    <subcellularLocation>
        <location evidence="4">Cytoplasm</location>
    </subcellularLocation>
    <text evidence="4">Shuttles between the nuclear and cytoplasmic compartment (PubMed:15674325). A subpopulation concentrates in the nucleolus during late G1/S phase (PubMed:15674325).</text>
</comment>
<comment type="tissue specificity">
    <text evidence="4">Highly expressed in spleen and thymus (PubMed:15674325). Intermediate levels in liver, kidney, pancreas, prostate, testis, ovary, intestine, and leukocytes (PubMed:15674325). Low expression in heart, brain, placenta, lung, skeletal muscle, and colon (PubMed:15674325).</text>
</comment>
<comment type="domain">
    <text evidence="10">The PIP-box mediates the interaction with PCNA.</text>
</comment>
<comment type="PTM">
    <text evidence="5">Stimulated through its phosphorylation by CDK2 (PubMed:16455663). Acquires CDK-dependent phosphorylation through late-G1 to S phase, and from prometaphase to cytokinesis in the nucleolar organizing regions (PubMed:16455663). Phosphorylation is suppressed in growth-arrested cells (PubMed:16455663).</text>
</comment>
<comment type="PTM">
    <text evidence="6 11">Auto-mono-ADP-ribosylated on glutamate and lysine residues.</text>
</comment>
<comment type="similarity">
    <text evidence="13">Belongs to the ARTD/PARP family.</text>
</comment>
<comment type="sequence caution" evidence="13">
    <conflict type="frameshift">
        <sequence resource="EMBL-CDS" id="BAC11498"/>
    </conflict>
</comment>
<evidence type="ECO:0000255" key="1">
    <source>
        <dbReference type="PROSITE-ProRule" id="PRU00397"/>
    </source>
</evidence>
<evidence type="ECO:0000256" key="2">
    <source>
        <dbReference type="SAM" id="MobiDB-lite"/>
    </source>
</evidence>
<evidence type="ECO:0000269" key="3">
    <source>
    </source>
</evidence>
<evidence type="ECO:0000269" key="4">
    <source>
    </source>
</evidence>
<evidence type="ECO:0000269" key="5">
    <source>
    </source>
</evidence>
<evidence type="ECO:0000269" key="6">
    <source>
    </source>
</evidence>
<evidence type="ECO:0000269" key="7">
    <source>
    </source>
</evidence>
<evidence type="ECO:0000269" key="8">
    <source>
    </source>
</evidence>
<evidence type="ECO:0000269" key="9">
    <source>
    </source>
</evidence>
<evidence type="ECO:0000269" key="10">
    <source>
    </source>
</evidence>
<evidence type="ECO:0000269" key="11">
    <source>
    </source>
</evidence>
<evidence type="ECO:0000303" key="12">
    <source>
    </source>
</evidence>
<evidence type="ECO:0000305" key="13"/>
<evidence type="ECO:0000305" key="14">
    <source>
    </source>
</evidence>
<evidence type="ECO:0000312" key="15">
    <source>
        <dbReference type="HGNC" id="HGNC:25895"/>
    </source>
</evidence>
<evidence type="ECO:0007744" key="16">
    <source>
    </source>
</evidence>
<evidence type="ECO:0007744" key="17">
    <source>
    </source>
</evidence>
<evidence type="ECO:0007744" key="18">
    <source>
    </source>
</evidence>
<evidence type="ECO:0007829" key="19">
    <source>
        <dbReference type="PDB" id="2DHX"/>
    </source>
</evidence>
<evidence type="ECO:0007829" key="20">
    <source>
        <dbReference type="PDB" id="3HKV"/>
    </source>
</evidence>
<evidence type="ECO:0007829" key="21">
    <source>
        <dbReference type="PDB" id="5LX6"/>
    </source>
</evidence>
<evidence type="ECO:0007829" key="22">
    <source>
        <dbReference type="PDB" id="6FXI"/>
    </source>
</evidence>
<protein>
    <recommendedName>
        <fullName evidence="13">Protein mono-ADP-ribosyltransferase PARP10</fullName>
        <ecNumber evidence="6 11">2.4.2.-</ecNumber>
    </recommendedName>
    <alternativeName>
        <fullName evidence="12">ADP-ribosyltransferase diphtheria toxin-like 10</fullName>
        <shortName evidence="12">ARTD10</shortName>
    </alternativeName>
    <alternativeName>
        <fullName evidence="12">Poly [ADP-ribose] polymerase 10</fullName>
        <shortName evidence="12">PARP-10</shortName>
    </alternativeName>
</protein>
<gene>
    <name evidence="15" type="primary">PARP10</name>
</gene>
<accession>Q53GL7</accession>
<accession>Q8N2I0</accession>
<accession>Q8WV05</accession>
<accession>Q96CH7</accession>
<accession>Q96K72</accession>
<organism>
    <name type="scientific">Homo sapiens</name>
    <name type="common">Human</name>
    <dbReference type="NCBI Taxonomy" id="9606"/>
    <lineage>
        <taxon>Eukaryota</taxon>
        <taxon>Metazoa</taxon>
        <taxon>Chordata</taxon>
        <taxon>Craniata</taxon>
        <taxon>Vertebrata</taxon>
        <taxon>Euteleostomi</taxon>
        <taxon>Mammalia</taxon>
        <taxon>Eutheria</taxon>
        <taxon>Euarchontoglires</taxon>
        <taxon>Primates</taxon>
        <taxon>Haplorrhini</taxon>
        <taxon>Catarrhini</taxon>
        <taxon>Hominidae</taxon>
        <taxon>Homo</taxon>
    </lineage>
</organism>